<evidence type="ECO:0000255" key="1">
    <source>
        <dbReference type="HAMAP-Rule" id="MF_00815"/>
    </source>
</evidence>
<name>ATPG_BACCZ</name>
<comment type="function">
    <text evidence="1">Produces ATP from ADP in the presence of a proton gradient across the membrane. The gamma chain is believed to be important in regulating ATPase activity and the flow of protons through the CF(0) complex.</text>
</comment>
<comment type="subunit">
    <text evidence="1">F-type ATPases have 2 components, CF(1) - the catalytic core - and CF(0) - the membrane proton channel. CF(1) has five subunits: alpha(3), beta(3), gamma(1), delta(1), epsilon(1). CF(0) has three main subunits: a, b and c.</text>
</comment>
<comment type="subcellular location">
    <subcellularLocation>
        <location evidence="1">Cell membrane</location>
        <topology evidence="1">Peripheral membrane protein</topology>
    </subcellularLocation>
</comment>
<comment type="similarity">
    <text evidence="1">Belongs to the ATPase gamma chain family.</text>
</comment>
<feature type="chain" id="PRO_0000073227" description="ATP synthase gamma chain">
    <location>
        <begin position="1"/>
        <end position="286"/>
    </location>
</feature>
<sequence length="286" mass="31606">MASLRDIKAKINSTKKTSQITKAMEMVSASKLNRAEQNAKSFVPYMEKIQEVVASIAQGSKGINHPMLNARPVKRTGYIVITSDRGLAGGYNSNVLRTVSNVIRERHNMDSNQYSIIVLGRLGRDYLKRRGFNIIDEVVGLSDHPSFTDIKDLASRAIAMFADGAYDELYIYYNHYVSKISQEVTENKILPLTDVASDKPTTAYEFEPSEEEILKVLLPQYAESLVYGALLDGKASEHAARMTAMKSATDNAMEVIDSLTLSFNRARQAAITQEITEIVGGAAALE</sequence>
<keyword id="KW-0066">ATP synthesis</keyword>
<keyword id="KW-1003">Cell membrane</keyword>
<keyword id="KW-0139">CF(1)</keyword>
<keyword id="KW-0375">Hydrogen ion transport</keyword>
<keyword id="KW-0406">Ion transport</keyword>
<keyword id="KW-0472">Membrane</keyword>
<keyword id="KW-0813">Transport</keyword>
<gene>
    <name evidence="1" type="primary">atpG</name>
    <name type="ordered locus">BCE33L5006</name>
</gene>
<organism>
    <name type="scientific">Bacillus cereus (strain ZK / E33L)</name>
    <dbReference type="NCBI Taxonomy" id="288681"/>
    <lineage>
        <taxon>Bacteria</taxon>
        <taxon>Bacillati</taxon>
        <taxon>Bacillota</taxon>
        <taxon>Bacilli</taxon>
        <taxon>Bacillales</taxon>
        <taxon>Bacillaceae</taxon>
        <taxon>Bacillus</taxon>
        <taxon>Bacillus cereus group</taxon>
    </lineage>
</organism>
<protein>
    <recommendedName>
        <fullName evidence="1">ATP synthase gamma chain</fullName>
    </recommendedName>
    <alternativeName>
        <fullName evidence="1">ATP synthase F1 sector gamma subunit</fullName>
    </alternativeName>
    <alternativeName>
        <fullName evidence="1">F-ATPase gamma subunit</fullName>
    </alternativeName>
</protein>
<proteinExistence type="inferred from homology"/>
<dbReference type="EMBL" id="CP000001">
    <property type="protein sequence ID" value="AAU15277.1"/>
    <property type="molecule type" value="Genomic_DNA"/>
</dbReference>
<dbReference type="RefSeq" id="WP_000157696.1">
    <property type="nucleotide sequence ID" value="NZ_CP009968.1"/>
</dbReference>
<dbReference type="SMR" id="Q630U2"/>
<dbReference type="GeneID" id="93005817"/>
<dbReference type="KEGG" id="bcz:BCE33L5006"/>
<dbReference type="PATRIC" id="fig|288681.22.peg.340"/>
<dbReference type="Proteomes" id="UP000002612">
    <property type="component" value="Chromosome"/>
</dbReference>
<dbReference type="GO" id="GO:0005886">
    <property type="term" value="C:plasma membrane"/>
    <property type="evidence" value="ECO:0007669"/>
    <property type="project" value="UniProtKB-SubCell"/>
</dbReference>
<dbReference type="GO" id="GO:0045259">
    <property type="term" value="C:proton-transporting ATP synthase complex"/>
    <property type="evidence" value="ECO:0007669"/>
    <property type="project" value="UniProtKB-KW"/>
</dbReference>
<dbReference type="GO" id="GO:0005524">
    <property type="term" value="F:ATP binding"/>
    <property type="evidence" value="ECO:0007669"/>
    <property type="project" value="UniProtKB-UniRule"/>
</dbReference>
<dbReference type="GO" id="GO:0046933">
    <property type="term" value="F:proton-transporting ATP synthase activity, rotational mechanism"/>
    <property type="evidence" value="ECO:0007669"/>
    <property type="project" value="UniProtKB-UniRule"/>
</dbReference>
<dbReference type="GO" id="GO:0042777">
    <property type="term" value="P:proton motive force-driven plasma membrane ATP synthesis"/>
    <property type="evidence" value="ECO:0007669"/>
    <property type="project" value="UniProtKB-UniRule"/>
</dbReference>
<dbReference type="CDD" id="cd12151">
    <property type="entry name" value="F1-ATPase_gamma"/>
    <property type="match status" value="1"/>
</dbReference>
<dbReference type="FunFam" id="3.40.1380.10:FF:000002">
    <property type="entry name" value="ATP synthase gamma chain"/>
    <property type="match status" value="1"/>
</dbReference>
<dbReference type="Gene3D" id="3.40.1380.10">
    <property type="match status" value="1"/>
</dbReference>
<dbReference type="Gene3D" id="1.10.287.80">
    <property type="entry name" value="ATP synthase, gamma subunit, helix hairpin domain"/>
    <property type="match status" value="1"/>
</dbReference>
<dbReference type="HAMAP" id="MF_00815">
    <property type="entry name" value="ATP_synth_gamma_bact"/>
    <property type="match status" value="1"/>
</dbReference>
<dbReference type="InterPro" id="IPR035968">
    <property type="entry name" value="ATP_synth_F1_ATPase_gsu"/>
</dbReference>
<dbReference type="InterPro" id="IPR000131">
    <property type="entry name" value="ATP_synth_F1_gsu"/>
</dbReference>
<dbReference type="InterPro" id="IPR023632">
    <property type="entry name" value="ATP_synth_F1_gsu_CS"/>
</dbReference>
<dbReference type="NCBIfam" id="TIGR01146">
    <property type="entry name" value="ATPsyn_F1gamma"/>
    <property type="match status" value="1"/>
</dbReference>
<dbReference type="PANTHER" id="PTHR11693">
    <property type="entry name" value="ATP SYNTHASE GAMMA CHAIN"/>
    <property type="match status" value="1"/>
</dbReference>
<dbReference type="PANTHER" id="PTHR11693:SF22">
    <property type="entry name" value="ATP SYNTHASE SUBUNIT GAMMA, MITOCHONDRIAL"/>
    <property type="match status" value="1"/>
</dbReference>
<dbReference type="Pfam" id="PF00231">
    <property type="entry name" value="ATP-synt"/>
    <property type="match status" value="1"/>
</dbReference>
<dbReference type="PRINTS" id="PR00126">
    <property type="entry name" value="ATPASEGAMMA"/>
</dbReference>
<dbReference type="SUPFAM" id="SSF52943">
    <property type="entry name" value="ATP synthase (F1-ATPase), gamma subunit"/>
    <property type="match status" value="1"/>
</dbReference>
<dbReference type="PROSITE" id="PS00153">
    <property type="entry name" value="ATPASE_GAMMA"/>
    <property type="match status" value="1"/>
</dbReference>
<accession>Q630U2</accession>
<reference key="1">
    <citation type="journal article" date="2006" name="J. Bacteriol.">
        <title>Pathogenomic sequence analysis of Bacillus cereus and Bacillus thuringiensis isolates closely related to Bacillus anthracis.</title>
        <authorList>
            <person name="Han C.S."/>
            <person name="Xie G."/>
            <person name="Challacombe J.F."/>
            <person name="Altherr M.R."/>
            <person name="Bhotika S.S."/>
            <person name="Bruce D."/>
            <person name="Campbell C.S."/>
            <person name="Campbell M.L."/>
            <person name="Chen J."/>
            <person name="Chertkov O."/>
            <person name="Cleland C."/>
            <person name="Dimitrijevic M."/>
            <person name="Doggett N.A."/>
            <person name="Fawcett J.J."/>
            <person name="Glavina T."/>
            <person name="Goodwin L.A."/>
            <person name="Hill K.K."/>
            <person name="Hitchcock P."/>
            <person name="Jackson P.J."/>
            <person name="Keim P."/>
            <person name="Kewalramani A.R."/>
            <person name="Longmire J."/>
            <person name="Lucas S."/>
            <person name="Malfatti S."/>
            <person name="McMurry K."/>
            <person name="Meincke L.J."/>
            <person name="Misra M."/>
            <person name="Moseman B.L."/>
            <person name="Mundt M."/>
            <person name="Munk A.C."/>
            <person name="Okinaka R.T."/>
            <person name="Parson-Quintana B."/>
            <person name="Reilly L.P."/>
            <person name="Richardson P."/>
            <person name="Robinson D.L."/>
            <person name="Rubin E."/>
            <person name="Saunders E."/>
            <person name="Tapia R."/>
            <person name="Tesmer J.G."/>
            <person name="Thayer N."/>
            <person name="Thompson L.S."/>
            <person name="Tice H."/>
            <person name="Ticknor L.O."/>
            <person name="Wills P.L."/>
            <person name="Brettin T.S."/>
            <person name="Gilna P."/>
        </authorList>
    </citation>
    <scope>NUCLEOTIDE SEQUENCE [LARGE SCALE GENOMIC DNA]</scope>
    <source>
        <strain>ZK / E33L</strain>
    </source>
</reference>